<name>RL36_MYCBT</name>
<sequence length="37" mass="4343">MKVNPSVKPICDKCRLIRRHGRVMVICSDPRHKQRQG</sequence>
<proteinExistence type="inferred from homology"/>
<accession>C1AHR9</accession>
<dbReference type="EMBL" id="AP010918">
    <property type="protein sequence ID" value="BAH27798.1"/>
    <property type="molecule type" value="Genomic_DNA"/>
</dbReference>
<dbReference type="RefSeq" id="WP_003418367.1">
    <property type="nucleotide sequence ID" value="NZ_CP014566.1"/>
</dbReference>
<dbReference type="SMR" id="C1AHR9"/>
<dbReference type="GeneID" id="45427450"/>
<dbReference type="KEGG" id="mbt:JTY_3526"/>
<dbReference type="HOGENOM" id="CLU_135723_6_2_11"/>
<dbReference type="GO" id="GO:0005737">
    <property type="term" value="C:cytoplasm"/>
    <property type="evidence" value="ECO:0007669"/>
    <property type="project" value="UniProtKB-ARBA"/>
</dbReference>
<dbReference type="GO" id="GO:1990904">
    <property type="term" value="C:ribonucleoprotein complex"/>
    <property type="evidence" value="ECO:0007669"/>
    <property type="project" value="UniProtKB-KW"/>
</dbReference>
<dbReference type="GO" id="GO:0005840">
    <property type="term" value="C:ribosome"/>
    <property type="evidence" value="ECO:0007669"/>
    <property type="project" value="UniProtKB-KW"/>
</dbReference>
<dbReference type="GO" id="GO:0003735">
    <property type="term" value="F:structural constituent of ribosome"/>
    <property type="evidence" value="ECO:0007669"/>
    <property type="project" value="InterPro"/>
</dbReference>
<dbReference type="GO" id="GO:0006412">
    <property type="term" value="P:translation"/>
    <property type="evidence" value="ECO:0007669"/>
    <property type="project" value="UniProtKB-UniRule"/>
</dbReference>
<dbReference type="HAMAP" id="MF_00251">
    <property type="entry name" value="Ribosomal_bL36"/>
    <property type="match status" value="1"/>
</dbReference>
<dbReference type="InterPro" id="IPR000473">
    <property type="entry name" value="Ribosomal_bL36"/>
</dbReference>
<dbReference type="InterPro" id="IPR035977">
    <property type="entry name" value="Ribosomal_bL36_sp"/>
</dbReference>
<dbReference type="NCBIfam" id="TIGR01022">
    <property type="entry name" value="rpmJ_bact"/>
    <property type="match status" value="1"/>
</dbReference>
<dbReference type="PANTHER" id="PTHR42888">
    <property type="entry name" value="50S RIBOSOMAL PROTEIN L36, CHLOROPLASTIC"/>
    <property type="match status" value="1"/>
</dbReference>
<dbReference type="PANTHER" id="PTHR42888:SF1">
    <property type="entry name" value="LARGE RIBOSOMAL SUBUNIT PROTEIN BL36C"/>
    <property type="match status" value="1"/>
</dbReference>
<dbReference type="Pfam" id="PF00444">
    <property type="entry name" value="Ribosomal_L36"/>
    <property type="match status" value="1"/>
</dbReference>
<dbReference type="SUPFAM" id="SSF57840">
    <property type="entry name" value="Ribosomal protein L36"/>
    <property type="match status" value="1"/>
</dbReference>
<dbReference type="PROSITE" id="PS00828">
    <property type="entry name" value="RIBOSOMAL_L36"/>
    <property type="match status" value="1"/>
</dbReference>
<organism>
    <name type="scientific">Mycobacterium bovis (strain BCG / Tokyo 172 / ATCC 35737 / TMC 1019)</name>
    <dbReference type="NCBI Taxonomy" id="561275"/>
    <lineage>
        <taxon>Bacteria</taxon>
        <taxon>Bacillati</taxon>
        <taxon>Actinomycetota</taxon>
        <taxon>Actinomycetes</taxon>
        <taxon>Mycobacteriales</taxon>
        <taxon>Mycobacteriaceae</taxon>
        <taxon>Mycobacterium</taxon>
        <taxon>Mycobacterium tuberculosis complex</taxon>
    </lineage>
</organism>
<protein>
    <recommendedName>
        <fullName evidence="1">Large ribosomal subunit protein bL36</fullName>
    </recommendedName>
    <alternativeName>
        <fullName evidence="2">50S ribosomal protein L36</fullName>
    </alternativeName>
</protein>
<gene>
    <name evidence="1" type="primary">rpmJ</name>
    <name type="ordered locus">JTY_3526</name>
</gene>
<feature type="chain" id="PRO_1000196198" description="Large ribosomal subunit protein bL36">
    <location>
        <begin position="1"/>
        <end position="37"/>
    </location>
</feature>
<evidence type="ECO:0000255" key="1">
    <source>
        <dbReference type="HAMAP-Rule" id="MF_00251"/>
    </source>
</evidence>
<evidence type="ECO:0000305" key="2"/>
<comment type="similarity">
    <text evidence="1">Belongs to the bacterial ribosomal protein bL36 family.</text>
</comment>
<reference key="1">
    <citation type="journal article" date="2009" name="Vaccine">
        <title>Whole genome sequence analysis of Mycobacterium bovis bacillus Calmette-Guerin (BCG) Tokyo 172: a comparative study of BCG vaccine substrains.</title>
        <authorList>
            <person name="Seki M."/>
            <person name="Honda I."/>
            <person name="Fujita I."/>
            <person name="Yano I."/>
            <person name="Yamamoto S."/>
            <person name="Koyama A."/>
        </authorList>
    </citation>
    <scope>NUCLEOTIDE SEQUENCE [LARGE SCALE GENOMIC DNA]</scope>
    <source>
        <strain>BCG / Tokyo 172 / ATCC 35737 / TMC 1019</strain>
    </source>
</reference>
<keyword id="KW-0687">Ribonucleoprotein</keyword>
<keyword id="KW-0689">Ribosomal protein</keyword>